<dbReference type="EC" id="2.4.2.39" evidence="3"/>
<dbReference type="EMBL" id="KJ138777">
    <property type="protein sequence ID" value="AHL38717.1"/>
    <property type="molecule type" value="mRNA"/>
</dbReference>
<dbReference type="EMBL" id="AL162651">
    <property type="protein sequence ID" value="CAB83122.1"/>
    <property type="molecule type" value="Genomic_DNA"/>
</dbReference>
<dbReference type="EMBL" id="CP002686">
    <property type="protein sequence ID" value="AEE80383.1"/>
    <property type="molecule type" value="Genomic_DNA"/>
</dbReference>
<dbReference type="EMBL" id="CP002686">
    <property type="protein sequence ID" value="AEE80384.1"/>
    <property type="molecule type" value="Genomic_DNA"/>
</dbReference>
<dbReference type="EMBL" id="AF424587">
    <property type="protein sequence ID" value="AAL11581.1"/>
    <property type="molecule type" value="mRNA"/>
</dbReference>
<dbReference type="EMBL" id="BT002298">
    <property type="protein sequence ID" value="AAN73295.1"/>
    <property type="molecule type" value="mRNA"/>
</dbReference>
<dbReference type="EMBL" id="AK317529">
    <property type="protein sequence ID" value="BAH20193.1"/>
    <property type="molecule type" value="mRNA"/>
</dbReference>
<dbReference type="PIR" id="T48061">
    <property type="entry name" value="T48061"/>
</dbReference>
<dbReference type="RefSeq" id="NP_001030917.1">
    <property type="nucleotide sequence ID" value="NM_001035840.2"/>
</dbReference>
<dbReference type="RefSeq" id="NP_191831.1">
    <property type="nucleotide sequence ID" value="NM_116137.3"/>
</dbReference>
<dbReference type="PDB" id="6BSU">
    <property type="method" value="X-ray"/>
    <property type="resolution" value="1.50 A"/>
    <property type="chains" value="A/B=116-453"/>
</dbReference>
<dbReference type="PDB" id="6BSV">
    <property type="method" value="X-ray"/>
    <property type="resolution" value="2.43 A"/>
    <property type="chains" value="A/B=116-453"/>
</dbReference>
<dbReference type="PDB" id="6BSW">
    <property type="method" value="X-ray"/>
    <property type="resolution" value="2.16 A"/>
    <property type="chains" value="A/B=116-453"/>
</dbReference>
<dbReference type="PDBsum" id="6BSU"/>
<dbReference type="PDBsum" id="6BSV"/>
<dbReference type="PDBsum" id="6BSW"/>
<dbReference type="SMR" id="Q9LZJ3"/>
<dbReference type="BioGRID" id="10760">
    <property type="interactions" value="4"/>
</dbReference>
<dbReference type="FunCoup" id="Q9LZJ3">
    <property type="interactions" value="7"/>
</dbReference>
<dbReference type="STRING" id="3702.Q9LZJ3"/>
<dbReference type="CAZy" id="GT34">
    <property type="family name" value="Glycosyltransferase Family 34"/>
</dbReference>
<dbReference type="GlyCosmos" id="Q9LZJ3">
    <property type="glycosylation" value="1 site, No reported glycans"/>
</dbReference>
<dbReference type="GlyGen" id="Q9LZJ3">
    <property type="glycosylation" value="1 site"/>
</dbReference>
<dbReference type="PaxDb" id="3702-AT3G62720.1"/>
<dbReference type="ProteomicsDB" id="242407"/>
<dbReference type="EnsemblPlants" id="AT3G62720.1">
    <property type="protein sequence ID" value="AT3G62720.1"/>
    <property type="gene ID" value="AT3G62720"/>
</dbReference>
<dbReference type="EnsemblPlants" id="AT3G62720.2">
    <property type="protein sequence ID" value="AT3G62720.2"/>
    <property type="gene ID" value="AT3G62720"/>
</dbReference>
<dbReference type="GeneID" id="825446"/>
<dbReference type="Gramene" id="AT3G62720.1">
    <property type="protein sequence ID" value="AT3G62720.1"/>
    <property type="gene ID" value="AT3G62720"/>
</dbReference>
<dbReference type="Gramene" id="AT3G62720.2">
    <property type="protein sequence ID" value="AT3G62720.2"/>
    <property type="gene ID" value="AT3G62720"/>
</dbReference>
<dbReference type="KEGG" id="ath:AT3G62720"/>
<dbReference type="Araport" id="AT3G62720"/>
<dbReference type="TAIR" id="AT3G62720">
    <property type="gene designation" value="XT1"/>
</dbReference>
<dbReference type="eggNOG" id="KOG4748">
    <property type="taxonomic scope" value="Eukaryota"/>
</dbReference>
<dbReference type="HOGENOM" id="CLU_034328_1_1_1"/>
<dbReference type="InParanoid" id="Q9LZJ3"/>
<dbReference type="OMA" id="CIGAHRF"/>
<dbReference type="OrthoDB" id="205108at2759"/>
<dbReference type="PhylomeDB" id="Q9LZJ3"/>
<dbReference type="BioCyc" id="ARA:AT3G62720-MONOMER"/>
<dbReference type="BioCyc" id="MetaCyc:AT3G62720-MONOMER"/>
<dbReference type="BRENDA" id="2.4.2.39">
    <property type="organism ID" value="399"/>
</dbReference>
<dbReference type="UniPathway" id="UPA00378"/>
<dbReference type="PRO" id="PR:Q9LZJ3"/>
<dbReference type="Proteomes" id="UP000006548">
    <property type="component" value="Chromosome 3"/>
</dbReference>
<dbReference type="ExpressionAtlas" id="Q9LZJ3">
    <property type="expression patterns" value="baseline and differential"/>
</dbReference>
<dbReference type="GO" id="GO:0005829">
    <property type="term" value="C:cytosol"/>
    <property type="evidence" value="ECO:0007005"/>
    <property type="project" value="TAIR"/>
</dbReference>
<dbReference type="GO" id="GO:0005768">
    <property type="term" value="C:endosome"/>
    <property type="evidence" value="ECO:0007005"/>
    <property type="project" value="TAIR"/>
</dbReference>
<dbReference type="GO" id="GO:0005794">
    <property type="term" value="C:Golgi apparatus"/>
    <property type="evidence" value="ECO:0007005"/>
    <property type="project" value="TAIR"/>
</dbReference>
<dbReference type="GO" id="GO:0005797">
    <property type="term" value="C:Golgi medial cisterna"/>
    <property type="evidence" value="ECO:0000314"/>
    <property type="project" value="TAIR"/>
</dbReference>
<dbReference type="GO" id="GO:0000139">
    <property type="term" value="C:Golgi membrane"/>
    <property type="evidence" value="ECO:0007669"/>
    <property type="project" value="UniProtKB-SubCell"/>
</dbReference>
<dbReference type="GO" id="GO:0005802">
    <property type="term" value="C:trans-Golgi network"/>
    <property type="evidence" value="ECO:0007005"/>
    <property type="project" value="TAIR"/>
</dbReference>
<dbReference type="GO" id="GO:0046872">
    <property type="term" value="F:metal ion binding"/>
    <property type="evidence" value="ECO:0007669"/>
    <property type="project" value="UniProtKB-KW"/>
</dbReference>
<dbReference type="GO" id="GO:0035252">
    <property type="term" value="F:UDP-xylosyltransferase activity"/>
    <property type="evidence" value="ECO:0000314"/>
    <property type="project" value="TAIR"/>
</dbReference>
<dbReference type="GO" id="GO:0033843">
    <property type="term" value="F:xyloglucan 6-xylosyltransferase activity"/>
    <property type="evidence" value="ECO:0000314"/>
    <property type="project" value="TAIR"/>
</dbReference>
<dbReference type="GO" id="GO:0000271">
    <property type="term" value="P:polysaccharide biosynthetic process"/>
    <property type="evidence" value="ECO:0000314"/>
    <property type="project" value="TAIR"/>
</dbReference>
<dbReference type="GO" id="GO:0006486">
    <property type="term" value="P:protein glycosylation"/>
    <property type="evidence" value="ECO:0007669"/>
    <property type="project" value="UniProtKB-UniPathway"/>
</dbReference>
<dbReference type="GO" id="GO:0010411">
    <property type="term" value="P:xyloglucan metabolic process"/>
    <property type="evidence" value="ECO:0000314"/>
    <property type="project" value="TAIR"/>
</dbReference>
<dbReference type="FunFam" id="3.90.550.10:FF:000032">
    <property type="entry name" value="xyloglucan 6-xylosyltransferase 2"/>
    <property type="match status" value="1"/>
</dbReference>
<dbReference type="Gene3D" id="3.90.550.10">
    <property type="entry name" value="Spore Coat Polysaccharide Biosynthesis Protein SpsA, Chain A"/>
    <property type="match status" value="1"/>
</dbReference>
<dbReference type="InterPro" id="IPR008630">
    <property type="entry name" value="Glyco_trans_34"/>
</dbReference>
<dbReference type="InterPro" id="IPR029044">
    <property type="entry name" value="Nucleotide-diphossugar_trans"/>
</dbReference>
<dbReference type="PANTHER" id="PTHR31311:SF19">
    <property type="entry name" value="XYLOGLUCAN 6-XYLOSYLTRANSFERASE 1"/>
    <property type="match status" value="1"/>
</dbReference>
<dbReference type="PANTHER" id="PTHR31311">
    <property type="entry name" value="XYLOGLUCAN 6-XYLOSYLTRANSFERASE 5-RELATED-RELATED"/>
    <property type="match status" value="1"/>
</dbReference>
<dbReference type="Pfam" id="PF05637">
    <property type="entry name" value="Glyco_transf_34"/>
    <property type="match status" value="1"/>
</dbReference>
<comment type="function">
    <text evidence="2 3 4 7">Xylosyltransferase specific to UDP-D-xylose that accepts both cellopentaose and cellohexaose as substrates, with a better use of cellohexaose, to produce xyloglucan. Adds preferentially the first xylosyl residue to the fourth glucosyl residue from the reducing end of both acceptors. Transfer one xylose mainly to the second glucose residue from the non-reducing end. The acceptor should have a minimum of four glucose residues.</text>
</comment>
<comment type="catalytic activity">
    <reaction evidence="3">
        <text>Transfers an alpha-D-xylosyl residue from UDP-D-xylose to a glucose residue in xyloglucan, forming an alpha-(1-&gt;6)-D-xylosyl-D-glucose linkage.</text>
        <dbReference type="EC" id="2.4.2.39"/>
    </reaction>
</comment>
<comment type="cofactor">
    <cofactor evidence="3">
        <name>Mn(2+)</name>
        <dbReference type="ChEBI" id="CHEBI:29035"/>
    </cofactor>
    <text evidence="7">Binds 1 Mn(2+) ion per subunit.</text>
</comment>
<comment type="pathway">
    <text evidence="10">Protein modification; protein glycosylation.</text>
</comment>
<comment type="subunit">
    <text evidence="6 7">Forms homodimer (PubMed:29784804). Interacts with XXT2 (PubMed:22665445).</text>
</comment>
<comment type="subcellular location">
    <subcellularLocation>
        <location evidence="5 6">Golgi apparatus membrane</location>
        <topology evidence="10">Single-pass type II membrane protein</topology>
    </subcellularLocation>
    <text evidence="5">Mainly located in the cis and medial cisternae of Golgi apparatus.</text>
</comment>
<comment type="disruption phenotype">
    <text evidence="4">Reduced xyloglucan content.</text>
</comment>
<comment type="similarity">
    <text evidence="10">Belongs to the glycosyltransferase 34 family.</text>
</comment>
<proteinExistence type="evidence at protein level"/>
<name>XXT1_ARATH</name>
<evidence type="ECO:0000255" key="1"/>
<evidence type="ECO:0000269" key="2">
    <source>
    </source>
</evidence>
<evidence type="ECO:0000269" key="3">
    <source>
    </source>
</evidence>
<evidence type="ECO:0000269" key="4">
    <source>
    </source>
</evidence>
<evidence type="ECO:0000269" key="5">
    <source>
    </source>
</evidence>
<evidence type="ECO:0000269" key="6">
    <source>
    </source>
</evidence>
<evidence type="ECO:0000269" key="7">
    <source>
    </source>
</evidence>
<evidence type="ECO:0000303" key="8">
    <source>
    </source>
</evidence>
<evidence type="ECO:0000303" key="9">
    <source>
    </source>
</evidence>
<evidence type="ECO:0000305" key="10"/>
<evidence type="ECO:0000312" key="11">
    <source>
        <dbReference type="Araport" id="AT3G62720"/>
    </source>
</evidence>
<evidence type="ECO:0000312" key="12">
    <source>
        <dbReference type="EMBL" id="CAB83122.1"/>
    </source>
</evidence>
<evidence type="ECO:0007744" key="13">
    <source>
        <dbReference type="PDB" id="6BSV"/>
    </source>
</evidence>
<evidence type="ECO:0007744" key="14">
    <source>
        <dbReference type="PDB" id="6BSW"/>
    </source>
</evidence>
<evidence type="ECO:0007829" key="15">
    <source>
        <dbReference type="PDB" id="6BSU"/>
    </source>
</evidence>
<evidence type="ECO:0007829" key="16">
    <source>
        <dbReference type="PDB" id="6BSW"/>
    </source>
</evidence>
<reference key="1">
    <citation type="journal article" date="2014" name="Plant J.">
        <title>The plant glycosyltransferase clone collection for functional genomics.</title>
        <authorList>
            <person name="Lao J."/>
            <person name="Oikawa A."/>
            <person name="Bromley J.R."/>
            <person name="McInerney P."/>
            <person name="Suttangkakul A."/>
            <person name="Smith-Moritz A.M."/>
            <person name="Plahar H."/>
            <person name="Chiu T.-Y."/>
            <person name="Gonzalez Fernandez-Nino S.M.G."/>
            <person name="Ebert B."/>
            <person name="Yang F."/>
            <person name="Christiansen K.M."/>
            <person name="Hansen S.F."/>
            <person name="Stonebloom S."/>
            <person name="Adams P.D."/>
            <person name="Ronald P.C."/>
            <person name="Hillson N.J."/>
            <person name="Hadi M.Z."/>
            <person name="Vega-Sanchez M.E."/>
            <person name="Loque D."/>
            <person name="Scheller H.V."/>
            <person name="Heazlewood J.L."/>
        </authorList>
    </citation>
    <scope>NUCLEOTIDE SEQUENCE [MRNA]</scope>
    <source>
        <strain>cv. Columbia</strain>
    </source>
</reference>
<reference key="2">
    <citation type="journal article" date="2000" name="Nature">
        <title>Sequence and analysis of chromosome 3 of the plant Arabidopsis thaliana.</title>
        <authorList>
            <person name="Salanoubat M."/>
            <person name="Lemcke K."/>
            <person name="Rieger M."/>
            <person name="Ansorge W."/>
            <person name="Unseld M."/>
            <person name="Fartmann B."/>
            <person name="Valle G."/>
            <person name="Bloecker H."/>
            <person name="Perez-Alonso M."/>
            <person name="Obermaier B."/>
            <person name="Delseny M."/>
            <person name="Boutry M."/>
            <person name="Grivell L.A."/>
            <person name="Mache R."/>
            <person name="Puigdomenech P."/>
            <person name="De Simone V."/>
            <person name="Choisne N."/>
            <person name="Artiguenave F."/>
            <person name="Robert C."/>
            <person name="Brottier P."/>
            <person name="Wincker P."/>
            <person name="Cattolico L."/>
            <person name="Weissenbach J."/>
            <person name="Saurin W."/>
            <person name="Quetier F."/>
            <person name="Schaefer M."/>
            <person name="Mueller-Auer S."/>
            <person name="Gabel C."/>
            <person name="Fuchs M."/>
            <person name="Benes V."/>
            <person name="Wurmbach E."/>
            <person name="Drzonek H."/>
            <person name="Erfle H."/>
            <person name="Jordan N."/>
            <person name="Bangert S."/>
            <person name="Wiedelmann R."/>
            <person name="Kranz H."/>
            <person name="Voss H."/>
            <person name="Holland R."/>
            <person name="Brandt P."/>
            <person name="Nyakatura G."/>
            <person name="Vezzi A."/>
            <person name="D'Angelo M."/>
            <person name="Pallavicini A."/>
            <person name="Toppo S."/>
            <person name="Simionati B."/>
            <person name="Conrad A."/>
            <person name="Hornischer K."/>
            <person name="Kauer G."/>
            <person name="Loehnert T.-H."/>
            <person name="Nordsiek G."/>
            <person name="Reichelt J."/>
            <person name="Scharfe M."/>
            <person name="Schoen O."/>
            <person name="Bargues M."/>
            <person name="Terol J."/>
            <person name="Climent J."/>
            <person name="Navarro P."/>
            <person name="Collado C."/>
            <person name="Perez-Perez A."/>
            <person name="Ottenwaelder B."/>
            <person name="Duchemin D."/>
            <person name="Cooke R."/>
            <person name="Laudie M."/>
            <person name="Berger-Llauro C."/>
            <person name="Purnelle B."/>
            <person name="Masuy D."/>
            <person name="de Haan M."/>
            <person name="Maarse A.C."/>
            <person name="Alcaraz J.-P."/>
            <person name="Cottet A."/>
            <person name="Casacuberta E."/>
            <person name="Monfort A."/>
            <person name="Argiriou A."/>
            <person name="Flores M."/>
            <person name="Liguori R."/>
            <person name="Vitale D."/>
            <person name="Mannhaupt G."/>
            <person name="Haase D."/>
            <person name="Schoof H."/>
            <person name="Rudd S."/>
            <person name="Zaccaria P."/>
            <person name="Mewes H.-W."/>
            <person name="Mayer K.F.X."/>
            <person name="Kaul S."/>
            <person name="Town C.D."/>
            <person name="Koo H.L."/>
            <person name="Tallon L.J."/>
            <person name="Jenkins J."/>
            <person name="Rooney T."/>
            <person name="Rizzo M."/>
            <person name="Walts A."/>
            <person name="Utterback T."/>
            <person name="Fujii C.Y."/>
            <person name="Shea T.P."/>
            <person name="Creasy T.H."/>
            <person name="Haas B."/>
            <person name="Maiti R."/>
            <person name="Wu D."/>
            <person name="Peterson J."/>
            <person name="Van Aken S."/>
            <person name="Pai G."/>
            <person name="Militscher J."/>
            <person name="Sellers P."/>
            <person name="Gill J.E."/>
            <person name="Feldblyum T.V."/>
            <person name="Preuss D."/>
            <person name="Lin X."/>
            <person name="Nierman W.C."/>
            <person name="Salzberg S.L."/>
            <person name="White O."/>
            <person name="Venter J.C."/>
            <person name="Fraser C.M."/>
            <person name="Kaneko T."/>
            <person name="Nakamura Y."/>
            <person name="Sato S."/>
            <person name="Kato T."/>
            <person name="Asamizu E."/>
            <person name="Sasamoto S."/>
            <person name="Kimura T."/>
            <person name="Idesawa K."/>
            <person name="Kawashima K."/>
            <person name="Kishida Y."/>
            <person name="Kiyokawa C."/>
            <person name="Kohara M."/>
            <person name="Matsumoto M."/>
            <person name="Matsuno A."/>
            <person name="Muraki A."/>
            <person name="Nakayama S."/>
            <person name="Nakazaki N."/>
            <person name="Shinpo S."/>
            <person name="Takeuchi C."/>
            <person name="Wada T."/>
            <person name="Watanabe A."/>
            <person name="Yamada M."/>
            <person name="Yasuda M."/>
            <person name="Tabata S."/>
        </authorList>
    </citation>
    <scope>NUCLEOTIDE SEQUENCE [LARGE SCALE GENOMIC DNA]</scope>
    <source>
        <strain>cv. Columbia</strain>
    </source>
</reference>
<reference key="3">
    <citation type="journal article" date="2017" name="Plant J.">
        <title>Araport11: a complete reannotation of the Arabidopsis thaliana reference genome.</title>
        <authorList>
            <person name="Cheng C.Y."/>
            <person name="Krishnakumar V."/>
            <person name="Chan A.P."/>
            <person name="Thibaud-Nissen F."/>
            <person name="Schobel S."/>
            <person name="Town C.D."/>
        </authorList>
    </citation>
    <scope>GENOME REANNOTATION</scope>
    <source>
        <strain>cv. Columbia</strain>
    </source>
</reference>
<reference key="4">
    <citation type="journal article" date="2003" name="Science">
        <title>Empirical analysis of transcriptional activity in the Arabidopsis genome.</title>
        <authorList>
            <person name="Yamada K."/>
            <person name="Lim J."/>
            <person name="Dale J.M."/>
            <person name="Chen H."/>
            <person name="Shinn P."/>
            <person name="Palm C.J."/>
            <person name="Southwick A.M."/>
            <person name="Wu H.C."/>
            <person name="Kim C.J."/>
            <person name="Nguyen M."/>
            <person name="Pham P.K."/>
            <person name="Cheuk R.F."/>
            <person name="Karlin-Newmann G."/>
            <person name="Liu S.X."/>
            <person name="Lam B."/>
            <person name="Sakano H."/>
            <person name="Wu T."/>
            <person name="Yu G."/>
            <person name="Miranda M."/>
            <person name="Quach H.L."/>
            <person name="Tripp M."/>
            <person name="Chang C.H."/>
            <person name="Lee J.M."/>
            <person name="Toriumi M.J."/>
            <person name="Chan M.M."/>
            <person name="Tang C.C."/>
            <person name="Onodera C.S."/>
            <person name="Deng J.M."/>
            <person name="Akiyama K."/>
            <person name="Ansari Y."/>
            <person name="Arakawa T."/>
            <person name="Banh J."/>
            <person name="Banno F."/>
            <person name="Bowser L."/>
            <person name="Brooks S.Y."/>
            <person name="Carninci P."/>
            <person name="Chao Q."/>
            <person name="Choy N."/>
            <person name="Enju A."/>
            <person name="Goldsmith A.D."/>
            <person name="Gurjal M."/>
            <person name="Hansen N.F."/>
            <person name="Hayashizaki Y."/>
            <person name="Johnson-Hopson C."/>
            <person name="Hsuan V.W."/>
            <person name="Iida K."/>
            <person name="Karnes M."/>
            <person name="Khan S."/>
            <person name="Koesema E."/>
            <person name="Ishida J."/>
            <person name="Jiang P.X."/>
            <person name="Jones T."/>
            <person name="Kawai J."/>
            <person name="Kamiya A."/>
            <person name="Meyers C."/>
            <person name="Nakajima M."/>
            <person name="Narusaka M."/>
            <person name="Seki M."/>
            <person name="Sakurai T."/>
            <person name="Satou M."/>
            <person name="Tamse R."/>
            <person name="Vaysberg M."/>
            <person name="Wallender E.K."/>
            <person name="Wong C."/>
            <person name="Yamamura Y."/>
            <person name="Yuan S."/>
            <person name="Shinozaki K."/>
            <person name="Davis R.W."/>
            <person name="Theologis A."/>
            <person name="Ecker J.R."/>
        </authorList>
    </citation>
    <scope>NUCLEOTIDE SEQUENCE [LARGE SCALE MRNA]</scope>
    <source>
        <strain>cv. Columbia</strain>
    </source>
</reference>
<reference key="5">
    <citation type="journal article" date="2009" name="DNA Res.">
        <title>Analysis of multiple occurrences of alternative splicing events in Arabidopsis thaliana using novel sequenced full-length cDNAs.</title>
        <authorList>
            <person name="Iida K."/>
            <person name="Fukami-Kobayashi K."/>
            <person name="Toyoda A."/>
            <person name="Sakaki Y."/>
            <person name="Kobayashi M."/>
            <person name="Seki M."/>
            <person name="Shinozaki K."/>
        </authorList>
    </citation>
    <scope>NUCLEOTIDE SEQUENCE [LARGE SCALE MRNA]</scope>
    <source>
        <strain>cv. Columbia</strain>
    </source>
</reference>
<reference key="6">
    <citation type="journal article" date="2002" name="Proc. Natl. Acad. Sci. U.S.A.">
        <title>An Arabidopsis gene encoding an alpha-xylosyltransferase involved in xyloglucan biosynthesis.</title>
        <authorList>
            <person name="Faik A."/>
            <person name="Price N.J."/>
            <person name="Raikhel N.V."/>
            <person name="Keegstra K."/>
        </authorList>
    </citation>
    <scope>FUNCTION</scope>
    <scope>CHARACTERIZATION</scope>
</reference>
<reference key="7">
    <citation type="journal article" date="2006" name="J. Biol. Chem.">
        <title>Two xyloglucan xylosyltransferases catalyze the addition of multiple xylosyl residues to cellohexaose.</title>
        <authorList>
            <person name="Cavalier D.M."/>
            <person name="Keegstra K."/>
        </authorList>
    </citation>
    <scope>FUNCTION</scope>
    <scope>CATALYTIC ACTIVITY</scope>
    <scope>COFACTOR</scope>
</reference>
<reference key="8">
    <citation type="journal article" date="2008" name="Plant Cell">
        <title>Disrupting two Arabidopsis thaliana xylosyltransferase genes results in plants deficient in xyloglucan, a major primary cell wall component.</title>
        <authorList>
            <person name="Cavalier D.M."/>
            <person name="Lerouxel O."/>
            <person name="Neumetzler L."/>
            <person name="Yamauchi K."/>
            <person name="Reinecke A."/>
            <person name="Freshour G."/>
            <person name="Zabotina O.A."/>
            <person name="Hahn M.G."/>
            <person name="Burgert I."/>
            <person name="Pauly M."/>
            <person name="Raikhel N.V."/>
            <person name="Keegstra K."/>
        </authorList>
    </citation>
    <scope>FUNCTION</scope>
    <scope>DISRUPTION PHENOTYPE</scope>
</reference>
<reference key="9">
    <citation type="journal article" date="2008" name="Plant J.">
        <title>Arabidopsis XXT5 gene encodes a putative alpha-1,6-xylosyltransferase that is involved in xyloglucan biosynthesis.</title>
        <authorList>
            <person name="Zabotina O.A."/>
            <person name="van de Ven W.T."/>
            <person name="Freshour G."/>
            <person name="Drakakaki G."/>
            <person name="Cavalier D."/>
            <person name="Mouille G."/>
            <person name="Hahn M.G."/>
            <person name="Keegstra K."/>
            <person name="Raikhel N.V."/>
        </authorList>
    </citation>
    <scope>NOMENCLATURE</scope>
</reference>
<reference key="10">
    <citation type="journal article" date="2010" name="Plant J.">
        <title>Subcompartment localization of the side chain xyloglucan-synthesizing enzymes within Golgi stacks of tobacco suspension-cultured cells.</title>
        <authorList>
            <person name="Chevalier L."/>
            <person name="Bernard S."/>
            <person name="Ramdani Y."/>
            <person name="Lamour R."/>
            <person name="Bardor M."/>
            <person name="Lerouge P."/>
            <person name="Follet-Gueye M.L."/>
            <person name="Driouich A."/>
        </authorList>
    </citation>
    <scope>SUBCELLULAR LOCATION</scope>
</reference>
<reference key="11">
    <citation type="journal article" date="2012" name="Plant Physiol.">
        <title>Xyloglucan xylosyltransferases XXT1, XXT2, and XXT5 and the glucan synthase CSLC4 form Golgi-localized multiprotein complexes.</title>
        <authorList>
            <person name="Chou Y.H."/>
            <person name="Pogorelko G."/>
            <person name="Zabotina O.A."/>
        </authorList>
    </citation>
    <scope>INTERACTION WITH XXT2</scope>
    <scope>SUBCELLULAR LOCATION</scope>
</reference>
<reference key="12">
    <citation type="journal article" date="2018" name="Proc. Natl. Acad. Sci. U.S.A.">
        <title>Structure of xyloglucan xylosyltransferase 1 reveals simple steric rules that define biological patterns of xyloglucan polymers.</title>
        <authorList>
            <person name="Culbertson A.T."/>
            <person name="Ehrlich J.J."/>
            <person name="Choe J.Y."/>
            <person name="Honzatko R.B."/>
            <person name="Zabotina O.A."/>
        </authorList>
    </citation>
    <scope>X-RAY CRYSTALLOGRAPHY (1.50 ANGSTROMS) OF 116-453 IN COMPLEX WITH UDP; SUBSTRATE AND MANGANESE</scope>
    <scope>FUNCTION</scope>
    <scope>HOMODIMER</scope>
    <scope>MUTAGENESIS OF LYS-206; ASP-227; SER-228; ASP-229; ASN-268; ASP-317; ASP-318; GLN-319; HIS-377 AND LYS-382</scope>
</reference>
<protein>
    <recommendedName>
        <fullName evidence="8">Xyloglucan 6-xylosyltransferase 1</fullName>
        <shortName evidence="8">AtXT1</shortName>
        <ecNumber evidence="3">2.4.2.39</ecNumber>
    </recommendedName>
</protein>
<organism>
    <name type="scientific">Arabidopsis thaliana</name>
    <name type="common">Mouse-ear cress</name>
    <dbReference type="NCBI Taxonomy" id="3702"/>
    <lineage>
        <taxon>Eukaryota</taxon>
        <taxon>Viridiplantae</taxon>
        <taxon>Streptophyta</taxon>
        <taxon>Embryophyta</taxon>
        <taxon>Tracheophyta</taxon>
        <taxon>Spermatophyta</taxon>
        <taxon>Magnoliopsida</taxon>
        <taxon>eudicotyledons</taxon>
        <taxon>Gunneridae</taxon>
        <taxon>Pentapetalae</taxon>
        <taxon>rosids</taxon>
        <taxon>malvids</taxon>
        <taxon>Brassicales</taxon>
        <taxon>Brassicaceae</taxon>
        <taxon>Camelineae</taxon>
        <taxon>Arabidopsis</taxon>
    </lineage>
</organism>
<accession>Q9LZJ3</accession>
<accession>B9DHH6</accession>
<keyword id="KW-0002">3D-structure</keyword>
<keyword id="KW-0325">Glycoprotein</keyword>
<keyword id="KW-0328">Glycosyltransferase</keyword>
<keyword id="KW-0333">Golgi apparatus</keyword>
<keyword id="KW-0464">Manganese</keyword>
<keyword id="KW-0472">Membrane</keyword>
<keyword id="KW-0479">Metal-binding</keyword>
<keyword id="KW-1185">Reference proteome</keyword>
<keyword id="KW-0735">Signal-anchor</keyword>
<keyword id="KW-0808">Transferase</keyword>
<keyword id="KW-0812">Transmembrane</keyword>
<keyword id="KW-1133">Transmembrane helix</keyword>
<gene>
    <name evidence="9" type="primary">XXT1</name>
    <name evidence="8" type="synonym">XT1</name>
    <name evidence="11" type="ordered locus">At3g62720</name>
    <name evidence="12" type="ORF">F26K9_150</name>
</gene>
<sequence>MIEKCIGAHRFRRLQRFMRQGKVTILCLVLTVIVLRGTIGAGKFGTPEKDIEEIREHFFYTRKRGEPHRVLVEVSSKTTSSEDGGNGGNSYETFDINKLFVDEGDEEKSRDRTNKPYSLGPKISDWDEQRRDWLKQNPSFPNFVAPNKPRVLLVTGSAPKPCENPVGDHYLLKSIKNKIDYCRIHGIEIFYNMALLDAEMAGFWAKLPLIRKLLLSHPEIEFLWWMDSDAMFTDMVFELPWERYKDYNLVMHGWNEMVYDQKNWIGLNTGSFLLRNSQWSLDLLDAWAPMGPKGKIREEAGKVLTRELKDRPAFEADDQSAMVYLLATEREKWGGKVYLESGYYLHGYWGILVDRYEEMIENHKPGFGDHRWPLVTHFVGCKPCGKFGDYPVERCLRQMDRAFNFGDNQILQMYGFTHKSLGSRRVKPTRNQTDRPLDAKDEFGLLHPPFKAAKLSTTTT</sequence>
<feature type="chain" id="PRO_0000215169" description="Xyloglucan 6-xylosyltransferase 1">
    <location>
        <begin position="1"/>
        <end position="460"/>
    </location>
</feature>
<feature type="topological domain" description="Cytoplasmic" evidence="10">
    <location>
        <begin position="1"/>
        <end position="20"/>
    </location>
</feature>
<feature type="transmembrane region" description="Helical; Signal-anchor for type II membrane protein" evidence="1">
    <location>
        <begin position="21"/>
        <end position="40"/>
    </location>
</feature>
<feature type="topological domain" description="Lumenal" evidence="10">
    <location>
        <begin position="41"/>
        <end position="460"/>
    </location>
</feature>
<feature type="binding site" evidence="7 13">
    <location>
        <position position="156"/>
    </location>
    <ligand>
        <name>UDP-alpha-D-xylose</name>
        <dbReference type="ChEBI" id="CHEBI:57632"/>
    </ligand>
</feature>
<feature type="binding site" evidence="7 14">
    <location>
        <begin position="227"/>
        <end position="229"/>
    </location>
    <ligand>
        <name>UDP-alpha-D-xylose</name>
        <dbReference type="ChEBI" id="CHEBI:57632"/>
    </ligand>
</feature>
<feature type="binding site" evidence="7">
    <location>
        <position position="227"/>
    </location>
    <ligand>
        <name>Mn(2+)</name>
        <dbReference type="ChEBI" id="CHEBI:29035"/>
    </ligand>
</feature>
<feature type="binding site" evidence="7">
    <location>
        <position position="229"/>
    </location>
    <ligand>
        <name>Mn(2+)</name>
        <dbReference type="ChEBI" id="CHEBI:29035"/>
    </ligand>
</feature>
<feature type="binding site" evidence="7 14">
    <location>
        <position position="346"/>
    </location>
    <ligand>
        <name>substrate</name>
    </ligand>
</feature>
<feature type="binding site" evidence="7">
    <location>
        <position position="377"/>
    </location>
    <ligand>
        <name>Mn(2+)</name>
        <dbReference type="ChEBI" id="CHEBI:29035"/>
    </ligand>
</feature>
<feature type="binding site" evidence="7 14">
    <location>
        <position position="377"/>
    </location>
    <ligand>
        <name>UDP-alpha-D-xylose</name>
        <dbReference type="ChEBI" id="CHEBI:57632"/>
    </ligand>
</feature>
<feature type="binding site" evidence="7 14">
    <location>
        <position position="380"/>
    </location>
    <ligand>
        <name>UDP-alpha-D-xylose</name>
        <dbReference type="ChEBI" id="CHEBI:57632"/>
    </ligand>
</feature>
<feature type="binding site" evidence="7 14">
    <location>
        <position position="382"/>
    </location>
    <ligand>
        <name>substrate</name>
    </ligand>
</feature>
<feature type="binding site" evidence="7 14">
    <location>
        <position position="382"/>
    </location>
    <ligand>
        <name>UDP-alpha-D-xylose</name>
        <dbReference type="ChEBI" id="CHEBI:57632"/>
    </ligand>
</feature>
<feature type="binding site" evidence="7 14">
    <location>
        <begin position="389"/>
        <end position="390"/>
    </location>
    <ligand>
        <name>substrate</name>
    </ligand>
</feature>
<feature type="glycosylation site" description="N-linked (GlcNAc...) asparagine" evidence="1">
    <location>
        <position position="431"/>
    </location>
</feature>
<feature type="mutagenesis site" description="Reduces activity 2-fold." evidence="7">
    <original>K</original>
    <variation>A</variation>
    <location>
        <position position="206"/>
    </location>
</feature>
<feature type="mutagenesis site" description="Reduces activity 3-fold." evidence="7">
    <original>D</original>
    <variation>A</variation>
    <location>
        <position position="227"/>
    </location>
</feature>
<feature type="mutagenesis site" description="Reduces activity 2-fold; when associated with N-229." evidence="7">
    <original>D</original>
    <variation>N</variation>
    <location>
        <position position="227"/>
    </location>
</feature>
<feature type="mutagenesis site" description="No effect on activity." evidence="7">
    <original>S</original>
    <variation>A</variation>
    <location>
        <position position="228"/>
    </location>
</feature>
<feature type="mutagenesis site" description="Reduces activity 2-fold; when associated with N-227." evidence="7">
    <original>D</original>
    <variation>N</variation>
    <location>
        <position position="229"/>
    </location>
</feature>
<feature type="mutagenesis site" description="No effect on activity." evidence="7">
    <original>N</original>
    <variation>A</variation>
    <location>
        <position position="268"/>
    </location>
</feature>
<feature type="mutagenesis site" description="Reduces activity 40-fold." evidence="7">
    <original>D</original>
    <variation>A</variation>
    <location>
        <position position="317"/>
    </location>
</feature>
<feature type="mutagenesis site" description="Reduces activity 40-fold." evidence="7">
    <original>D</original>
    <variation>A</variation>
    <location>
        <position position="318"/>
    </location>
</feature>
<feature type="mutagenesis site" description="Reduces activity 30-fold." evidence="7">
    <original>Q</original>
    <variation>A</variation>
    <location>
        <position position="319"/>
    </location>
</feature>
<feature type="mutagenesis site" description="Reduces activity 1.5-fold." evidence="7">
    <original>H</original>
    <variation>A</variation>
    <location>
        <position position="377"/>
    </location>
</feature>
<feature type="mutagenesis site" description="Reduces activity 10-fold." evidence="7">
    <original>K</original>
    <variation>A</variation>
    <location>
        <position position="382"/>
    </location>
</feature>
<feature type="strand" evidence="15">
    <location>
        <begin position="119"/>
        <end position="121"/>
    </location>
</feature>
<feature type="helix" evidence="15">
    <location>
        <begin position="126"/>
        <end position="136"/>
    </location>
</feature>
<feature type="strand" evidence="15">
    <location>
        <begin position="142"/>
        <end position="145"/>
    </location>
</feature>
<feature type="strand" evidence="15">
    <location>
        <begin position="151"/>
        <end position="156"/>
    </location>
</feature>
<feature type="helix" evidence="15">
    <location>
        <begin position="167"/>
        <end position="185"/>
    </location>
</feature>
<feature type="strand" evidence="15">
    <location>
        <begin position="188"/>
        <end position="192"/>
    </location>
</feature>
<feature type="helix" evidence="15">
    <location>
        <begin position="198"/>
        <end position="200"/>
    </location>
</feature>
<feature type="helix" evidence="15">
    <location>
        <begin position="202"/>
        <end position="204"/>
    </location>
</feature>
<feature type="helix" evidence="15">
    <location>
        <begin position="206"/>
        <end position="216"/>
    </location>
</feature>
<feature type="strand" evidence="15">
    <location>
        <begin position="221"/>
        <end position="226"/>
    </location>
</feature>
<feature type="strand" evidence="15">
    <location>
        <begin position="230"/>
        <end position="232"/>
    </location>
</feature>
<feature type="helix" evidence="15">
    <location>
        <begin position="241"/>
        <end position="244"/>
    </location>
</feature>
<feature type="strand" evidence="15">
    <location>
        <begin position="248"/>
        <end position="253"/>
    </location>
</feature>
<feature type="helix" evidence="15">
    <location>
        <begin position="255"/>
        <end position="259"/>
    </location>
</feature>
<feature type="strand" evidence="15">
    <location>
        <begin position="266"/>
        <end position="277"/>
    </location>
</feature>
<feature type="helix" evidence="15">
    <location>
        <begin position="278"/>
        <end position="287"/>
    </location>
</feature>
<feature type="helix" evidence="15">
    <location>
        <begin position="288"/>
        <end position="290"/>
    </location>
</feature>
<feature type="helix" evidence="15">
    <location>
        <begin position="295"/>
        <end position="307"/>
    </location>
</feature>
<feature type="strand" evidence="16">
    <location>
        <begin position="313"/>
        <end position="315"/>
    </location>
</feature>
<feature type="helix" evidence="15">
    <location>
        <begin position="318"/>
        <end position="328"/>
    </location>
</feature>
<feature type="helix" evidence="15">
    <location>
        <begin position="330"/>
        <end position="333"/>
    </location>
</feature>
<feature type="helix" evidence="15">
    <location>
        <begin position="334"/>
        <end position="336"/>
    </location>
</feature>
<feature type="strand" evidence="15">
    <location>
        <begin position="337"/>
        <end position="340"/>
    </location>
</feature>
<feature type="helix" evidence="15">
    <location>
        <begin position="349"/>
        <end position="351"/>
    </location>
</feature>
<feature type="helix" evidence="15">
    <location>
        <begin position="353"/>
        <end position="355"/>
    </location>
</feature>
<feature type="helix" evidence="15">
    <location>
        <begin position="356"/>
        <end position="362"/>
    </location>
</feature>
<feature type="strand" evidence="15">
    <location>
        <begin position="372"/>
        <end position="377"/>
    </location>
</feature>
<feature type="turn" evidence="16">
    <location>
        <begin position="379"/>
        <end position="381"/>
    </location>
</feature>
<feature type="strand" evidence="15">
    <location>
        <begin position="383"/>
        <end position="386"/>
    </location>
</feature>
<feature type="helix" evidence="15">
    <location>
        <begin position="392"/>
        <end position="413"/>
    </location>
</feature>
<feature type="strand" evidence="15">
    <location>
        <begin position="416"/>
        <end position="420"/>
    </location>
</feature>
<feature type="strand" evidence="15">
    <location>
        <begin position="426"/>
        <end position="430"/>
    </location>
</feature>
<feature type="turn" evidence="15">
    <location>
        <begin position="449"/>
        <end position="451"/>
    </location>
</feature>